<protein>
    <recommendedName>
        <fullName>Actin, alpha skeletal muscle</fullName>
        <ecNumber evidence="6">3.6.4.-</ecNumber>
    </recommendedName>
    <alternativeName>
        <fullName>Alpha-actin-1</fullName>
    </alternativeName>
    <component>
        <recommendedName>
            <fullName>Actin, alpha skeletal muscle, intermediate form</fullName>
        </recommendedName>
    </component>
</protein>
<sequence>MCDEDETTALVCDNGSGLVKAGFAGDDAPRAVFPSIVGRPRHQGVMVGMGQKDSYVGDEAQSKRGILTLKYPIEHGIITNWDDMEKIWHHTFYNELRVAPEEHPTLLTEAPLNPKANREKMTQIMFETFNVPAMYVAIQAVLSLYASGRTTGIVLDSGDGVTHNVPIYEGYALPHAIMRLDLAGRDLTDYLMKILTERGYSFVTTAEREIVRDIKEKLCYVALDFENEMATAASSSSLEKSYELPDGQVITIGNERFRCPETLFQPSFIGMESAGIHETTYNSIMKCDIDIRKDLYANNVMSGGTTMYPGIADRMQKEITALAPSTMKIKIIAPPERKYSVWIGGSILASLSTFQQMWITKQEYDEAGPSIVHRKCF</sequence>
<comment type="function">
    <text>Actins are highly conserved proteins that are involved in various types of cell motility and are ubiquitously expressed in all eukaryotic cells.</text>
</comment>
<comment type="catalytic activity">
    <reaction evidence="6">
        <text>ATP + H2O = ADP + phosphate + H(+)</text>
        <dbReference type="Rhea" id="RHEA:13065"/>
        <dbReference type="ChEBI" id="CHEBI:15377"/>
        <dbReference type="ChEBI" id="CHEBI:15378"/>
        <dbReference type="ChEBI" id="CHEBI:30616"/>
        <dbReference type="ChEBI" id="CHEBI:43474"/>
        <dbReference type="ChEBI" id="CHEBI:456216"/>
    </reaction>
</comment>
<comment type="subunit">
    <text evidence="3 5">Polymerization of globular actin (G-actin) leads to a structural filament (F-actin) in the form of a two-stranded helix. Each actin can bind to 4 others (By similarity). Interacts with alpha-actinin. Identified in a complex composed of ACTA1, COBL, GSN AND TMSB4X (By similarity). Interacts with TTID. Interacts (via its C-terminus) with USP25 (By similarity).</text>
</comment>
<comment type="subcellular location">
    <subcellularLocation>
        <location>Cytoplasm</location>
        <location>Cytoskeleton</location>
    </subcellularLocation>
</comment>
<comment type="PTM">
    <molecule>Actin, alpha skeletal muscle, intermediate form</molecule>
    <text evidence="4">N-terminal cleavage of acetylated cysteine of intermediate muscle actin by ACTMAP.</text>
</comment>
<comment type="PTM">
    <text evidence="4">Oxidation of Met-46 and Met-49 by MICALs (MICAL1, MICAL2 or MICAL3) to form methionine sulfoxide promotes actin filament depolymerization. MICAL1 and MICAL2 produce the (R)-S-oxide form. The (R)-S-oxide form is reverted by MSRB1 and MSRB2, which promotes actin repolymerization.</text>
</comment>
<comment type="PTM">
    <text evidence="3">Monomethylation at Lys-86 (K84me1) regulates actin-myosin interaction and actomyosin-dependent processes. Demethylation by ALKBH4 is required for maintaining actomyosin dynamics supporting normal cleavage furrow ingression during cytokinesis and cell migration.</text>
</comment>
<comment type="PTM">
    <text evidence="3">Methylated at His-75 by SETD3.</text>
</comment>
<comment type="miscellaneous">
    <text>In vertebrates 3 main groups of actin isoforms, alpha, beta and gamma have been identified. The alpha actins are found in muscle tissues and are a major constituent of the contractile apparatus. The beta and gamma actins coexist in most cell types as components of the cytoskeleton and as mediators of internal cell motility.</text>
</comment>
<comment type="similarity">
    <text evidence="8">Belongs to the actin family.</text>
</comment>
<name>ACTS_RAT</name>
<keyword id="KW-0002">3D-structure</keyword>
<keyword id="KW-0007">Acetylation</keyword>
<keyword id="KW-0067">ATP-binding</keyword>
<keyword id="KW-0963">Cytoplasm</keyword>
<keyword id="KW-0206">Cytoskeleton</keyword>
<keyword id="KW-0378">Hydrolase</keyword>
<keyword id="KW-0488">Methylation</keyword>
<keyword id="KW-0514">Muscle protein</keyword>
<keyword id="KW-0547">Nucleotide-binding</keyword>
<keyword id="KW-0558">Oxidation</keyword>
<keyword id="KW-1185">Reference proteome</keyword>
<reference key="1">
    <citation type="journal article" date="1982" name="Nature">
        <title>Nucleotide sequence of the rat skeletal muscle actin gene.</title>
        <authorList>
            <person name="Zakut R."/>
            <person name="Shani M."/>
            <person name="Givol D."/>
            <person name="Neuman S."/>
            <person name="Yaffe D."/>
            <person name="Nudel U."/>
        </authorList>
    </citation>
    <scope>NUCLEOTIDE SEQUENCE [GENOMIC DNA]</scope>
</reference>
<reference key="2">
    <citation type="journal article" date="2004" name="Genome Res.">
        <title>The status, quality, and expansion of the NIH full-length cDNA project: the Mammalian Gene Collection (MGC).</title>
        <authorList>
            <consortium name="The MGC Project Team"/>
        </authorList>
    </citation>
    <scope>NUCLEOTIDE SEQUENCE [LARGE SCALE MRNA]</scope>
    <source>
        <tissue>Prostate</tissue>
    </source>
</reference>
<reference key="3">
    <citation type="journal article" date="1981" name="Nucleic Acids Res.">
        <title>Skeletal muscle actin mRNA. Characterization of the 3' untranslated region.</title>
        <authorList>
            <person name="Shani M."/>
            <person name="Nudel U."/>
            <person name="Zevin-Sonkin D."/>
            <person name="Zakut R."/>
            <person name="Givol D."/>
            <person name="Katcoff D."/>
            <person name="Carmon Y."/>
            <person name="Reiter J."/>
            <person name="Frischauf A.-M."/>
            <person name="Yaffe D."/>
        </authorList>
    </citation>
    <scope>NUCLEOTIDE SEQUENCE OF 353-377</scope>
</reference>
<proteinExistence type="evidence at protein level"/>
<organism>
    <name type="scientific">Rattus norvegicus</name>
    <name type="common">Rat</name>
    <dbReference type="NCBI Taxonomy" id="10116"/>
    <lineage>
        <taxon>Eukaryota</taxon>
        <taxon>Metazoa</taxon>
        <taxon>Chordata</taxon>
        <taxon>Craniata</taxon>
        <taxon>Vertebrata</taxon>
        <taxon>Euteleostomi</taxon>
        <taxon>Mammalia</taxon>
        <taxon>Eutheria</taxon>
        <taxon>Euarchontoglires</taxon>
        <taxon>Glires</taxon>
        <taxon>Rodentia</taxon>
        <taxon>Myomorpha</taxon>
        <taxon>Muroidea</taxon>
        <taxon>Muridae</taxon>
        <taxon>Murinae</taxon>
        <taxon>Rattus</taxon>
    </lineage>
</organism>
<gene>
    <name type="primary">Acta1</name>
    <name type="synonym">Acta</name>
</gene>
<evidence type="ECO:0000250" key="1"/>
<evidence type="ECO:0000250" key="2">
    <source>
        <dbReference type="UniProtKB" id="P62737"/>
    </source>
</evidence>
<evidence type="ECO:0000250" key="3">
    <source>
        <dbReference type="UniProtKB" id="P68133"/>
    </source>
</evidence>
<evidence type="ECO:0000250" key="4">
    <source>
        <dbReference type="UniProtKB" id="P68134"/>
    </source>
</evidence>
<evidence type="ECO:0000250" key="5">
    <source>
        <dbReference type="UniProtKB" id="P68135"/>
    </source>
</evidence>
<evidence type="ECO:0000250" key="6">
    <source>
        <dbReference type="UniProtKB" id="P68137"/>
    </source>
</evidence>
<evidence type="ECO:0000250" key="7">
    <source>
        <dbReference type="UniProtKB" id="P68138"/>
    </source>
</evidence>
<evidence type="ECO:0000305" key="8"/>
<evidence type="ECO:0007829" key="9">
    <source>
        <dbReference type="PDB" id="3U9D"/>
    </source>
</evidence>
<feature type="initiator methionine" description="Removed">
    <location>
        <position position="1"/>
    </location>
</feature>
<feature type="chain" id="PRO_0000442813" description="Actin, alpha skeletal muscle, intermediate form" evidence="2">
    <location>
        <begin position="2"/>
        <end position="377"/>
    </location>
</feature>
<feature type="chain" id="PRO_0000442814" description="Actin, alpha skeletal muscle" evidence="2">
    <location>
        <begin position="3"/>
        <end position="377"/>
    </location>
</feature>
<feature type="region of interest" description="Interaction with alpha-actinin" evidence="5">
    <location>
        <begin position="112"/>
        <end position="125"/>
    </location>
</feature>
<feature type="region of interest" description="Interaction with alpha-actinin" evidence="5">
    <location>
        <begin position="360"/>
        <end position="372"/>
    </location>
</feature>
<feature type="modified residue" description="N-acetylcysteine; in intermediate form" evidence="2">
    <location>
        <position position="2"/>
    </location>
</feature>
<feature type="modified residue" description="Methionine (R)-sulfoxide" evidence="4">
    <location>
        <position position="46"/>
    </location>
</feature>
<feature type="modified residue" description="Methionine (R)-sulfoxide" evidence="4">
    <location>
        <position position="49"/>
    </location>
</feature>
<feature type="modified residue" description="N6-malonyllysine" evidence="1">
    <location>
        <position position="63"/>
    </location>
</feature>
<feature type="modified residue" description="Tele-methylhistidine" evidence="7">
    <location>
        <position position="75"/>
    </location>
</feature>
<feature type="modified residue" description="N6-methyllysine" evidence="3">
    <location>
        <position position="86"/>
    </location>
</feature>
<feature type="strand" evidence="9">
    <location>
        <begin position="10"/>
        <end position="14"/>
    </location>
</feature>
<feature type="strand" evidence="9">
    <location>
        <begin position="16"/>
        <end position="23"/>
    </location>
</feature>
<feature type="strand" evidence="9">
    <location>
        <begin position="26"/>
        <end position="28"/>
    </location>
</feature>
<feature type="strand" evidence="9">
    <location>
        <begin position="30"/>
        <end position="34"/>
    </location>
</feature>
<feature type="strand" evidence="9">
    <location>
        <begin position="37"/>
        <end position="41"/>
    </location>
</feature>
<feature type="helix" evidence="9">
    <location>
        <begin position="58"/>
        <end position="61"/>
    </location>
</feature>
<feature type="turn" evidence="9">
    <location>
        <begin position="62"/>
        <end position="66"/>
    </location>
</feature>
<feature type="strand" evidence="9">
    <location>
        <begin position="67"/>
        <end position="70"/>
    </location>
</feature>
<feature type="strand" evidence="9">
    <location>
        <begin position="72"/>
        <end position="74"/>
    </location>
</feature>
<feature type="helix" evidence="9">
    <location>
        <begin position="81"/>
        <end position="93"/>
    </location>
</feature>
<feature type="turn" evidence="9">
    <location>
        <begin position="94"/>
        <end position="96"/>
    </location>
</feature>
<feature type="helix" evidence="9">
    <location>
        <begin position="100"/>
        <end position="102"/>
    </location>
</feature>
<feature type="strand" evidence="9">
    <location>
        <begin position="105"/>
        <end position="109"/>
    </location>
</feature>
<feature type="helix" evidence="9">
    <location>
        <begin position="115"/>
        <end position="127"/>
    </location>
</feature>
<feature type="strand" evidence="9">
    <location>
        <begin position="132"/>
        <end position="138"/>
    </location>
</feature>
<feature type="helix" evidence="9">
    <location>
        <begin position="139"/>
        <end position="146"/>
    </location>
</feature>
<feature type="strand" evidence="9">
    <location>
        <begin position="150"/>
        <end position="157"/>
    </location>
</feature>
<feature type="strand" evidence="9">
    <location>
        <begin position="162"/>
        <end position="168"/>
    </location>
</feature>
<feature type="helix" evidence="9">
    <location>
        <begin position="174"/>
        <end position="176"/>
    </location>
</feature>
<feature type="strand" evidence="9">
    <location>
        <begin position="178"/>
        <end position="181"/>
    </location>
</feature>
<feature type="helix" evidence="9">
    <location>
        <begin position="184"/>
        <end position="196"/>
    </location>
</feature>
<feature type="turn" evidence="9">
    <location>
        <begin position="197"/>
        <end position="199"/>
    </location>
</feature>
<feature type="helix" evidence="9">
    <location>
        <begin position="205"/>
        <end position="218"/>
    </location>
</feature>
<feature type="helix" evidence="9">
    <location>
        <begin position="225"/>
        <end position="234"/>
    </location>
</feature>
<feature type="strand" evidence="9">
    <location>
        <begin position="240"/>
        <end position="243"/>
    </location>
</feature>
<feature type="strand" evidence="9">
    <location>
        <begin position="249"/>
        <end position="253"/>
    </location>
</feature>
<feature type="helix" evidence="9">
    <location>
        <begin position="255"/>
        <end position="261"/>
    </location>
</feature>
<feature type="turn" evidence="9">
    <location>
        <begin position="262"/>
        <end position="264"/>
    </location>
</feature>
<feature type="helix" evidence="9">
    <location>
        <begin position="266"/>
        <end position="268"/>
    </location>
</feature>
<feature type="helix" evidence="9">
    <location>
        <begin position="278"/>
        <end position="285"/>
    </location>
</feature>
<feature type="turn" evidence="9">
    <location>
        <begin position="289"/>
        <end position="291"/>
    </location>
</feature>
<feature type="helix" evidence="9">
    <location>
        <begin position="292"/>
        <end position="296"/>
    </location>
</feature>
<feature type="strand" evidence="9">
    <location>
        <begin position="299"/>
        <end position="303"/>
    </location>
</feature>
<feature type="helix" evidence="9">
    <location>
        <begin position="304"/>
        <end position="306"/>
    </location>
</feature>
<feature type="helix" evidence="9">
    <location>
        <begin position="311"/>
        <end position="322"/>
    </location>
</feature>
<feature type="turn" evidence="9">
    <location>
        <begin position="335"/>
        <end position="338"/>
    </location>
</feature>
<feature type="helix" evidence="9">
    <location>
        <begin position="340"/>
        <end position="348"/>
    </location>
</feature>
<feature type="helix" evidence="9">
    <location>
        <begin position="352"/>
        <end position="354"/>
    </location>
</feature>
<feature type="turn" evidence="9">
    <location>
        <begin position="355"/>
        <end position="357"/>
    </location>
</feature>
<feature type="strand" evidence="9">
    <location>
        <begin position="358"/>
        <end position="360"/>
    </location>
</feature>
<feature type="helix" evidence="9">
    <location>
        <begin position="361"/>
        <end position="367"/>
    </location>
</feature>
<feature type="helix" evidence="9">
    <location>
        <begin position="369"/>
        <end position="372"/>
    </location>
</feature>
<accession>P68136</accession>
<accession>P02568</accession>
<accession>P99020</accession>
<dbReference type="EC" id="3.6.4.-" evidence="6"/>
<dbReference type="EMBL" id="V01218">
    <property type="protein sequence ID" value="CAA24529.1"/>
    <property type="molecule type" value="Genomic_DNA"/>
</dbReference>
<dbReference type="EMBL" id="BC061974">
    <property type="protein sequence ID" value="AAH61974.1"/>
    <property type="molecule type" value="mRNA"/>
</dbReference>
<dbReference type="EMBL" id="V01224">
    <property type="protein sequence ID" value="CAA24534.1"/>
    <property type="molecule type" value="mRNA"/>
</dbReference>
<dbReference type="PIR" id="A93283">
    <property type="entry name" value="ATRT"/>
</dbReference>
<dbReference type="RefSeq" id="NP_062085.1">
    <property type="nucleotide sequence ID" value="NM_019212.3"/>
</dbReference>
<dbReference type="PDB" id="3U9D">
    <property type="method" value="X-ray"/>
    <property type="resolution" value="2.50 A"/>
    <property type="chains" value="A/C=3-377"/>
</dbReference>
<dbReference type="PDB" id="8ZBM">
    <property type="method" value="EM"/>
    <property type="resolution" value="3.32 A"/>
    <property type="chains" value="E/H/O/P/Q/R=7-377"/>
</dbReference>
<dbReference type="PDB" id="8ZIX">
    <property type="method" value="EM"/>
    <property type="resolution" value="3.54 A"/>
    <property type="chains" value="A/B/E/F/P/R=7-377"/>
</dbReference>
<dbReference type="PDBsum" id="3U9D"/>
<dbReference type="PDBsum" id="8ZBM"/>
<dbReference type="PDBsum" id="8ZIX"/>
<dbReference type="EMDB" id="EMD-39905"/>
<dbReference type="EMDB" id="EMD-60132"/>
<dbReference type="SMR" id="P68136"/>
<dbReference type="BioGRID" id="248084">
    <property type="interactions" value="9"/>
</dbReference>
<dbReference type="FunCoup" id="P68136">
    <property type="interactions" value="361"/>
</dbReference>
<dbReference type="IntAct" id="P68136">
    <property type="interactions" value="3"/>
</dbReference>
<dbReference type="STRING" id="10116.ENSRNOP00000024084"/>
<dbReference type="CarbonylDB" id="P68136"/>
<dbReference type="GlyGen" id="P68136">
    <property type="glycosylation" value="2 sites, 1 O-linked glycan (2 sites)"/>
</dbReference>
<dbReference type="iPTMnet" id="P68136"/>
<dbReference type="PhosphoSitePlus" id="P68136"/>
<dbReference type="SwissPalm" id="P68136"/>
<dbReference type="jPOST" id="P68136"/>
<dbReference type="PaxDb" id="10116-ENSRNOP00000024084"/>
<dbReference type="Ensembl" id="ENSRNOT00000024084.7">
    <property type="protein sequence ID" value="ENSRNOP00000024084.3"/>
    <property type="gene ID" value="ENSRNOG00000017786.7"/>
</dbReference>
<dbReference type="GeneID" id="29437"/>
<dbReference type="KEGG" id="rno:29437"/>
<dbReference type="UCSC" id="RGD:2025">
    <property type="organism name" value="rat"/>
</dbReference>
<dbReference type="AGR" id="RGD:2025"/>
<dbReference type="CTD" id="58"/>
<dbReference type="RGD" id="2025">
    <property type="gene designation" value="Acta1"/>
</dbReference>
<dbReference type="eggNOG" id="KOG0676">
    <property type="taxonomic scope" value="Eukaryota"/>
</dbReference>
<dbReference type="GeneTree" id="ENSGT00940000156048"/>
<dbReference type="HOGENOM" id="CLU_027965_0_2_1"/>
<dbReference type="InParanoid" id="P68136"/>
<dbReference type="OMA" id="EDAPRCC"/>
<dbReference type="OrthoDB" id="9545632at2759"/>
<dbReference type="PhylomeDB" id="P68136"/>
<dbReference type="TreeFam" id="TF354237"/>
<dbReference type="Reactome" id="R-RNO-390522">
    <property type="pathway name" value="Striated Muscle Contraction"/>
</dbReference>
<dbReference type="Reactome" id="R-RNO-9913351">
    <property type="pathway name" value="Formation of the dystrophin-glycoprotein complex (DGC)"/>
</dbReference>
<dbReference type="EvolutionaryTrace" id="P68136"/>
<dbReference type="PRO" id="PR:P68136"/>
<dbReference type="Proteomes" id="UP000002494">
    <property type="component" value="Chromosome 19"/>
</dbReference>
<dbReference type="Bgee" id="ENSRNOG00000017786">
    <property type="expression patterns" value="Expressed in skeletal muscle tissue and 19 other cell types or tissues"/>
</dbReference>
<dbReference type="GO" id="GO:0015629">
    <property type="term" value="C:actin cytoskeleton"/>
    <property type="evidence" value="ECO:0000266"/>
    <property type="project" value="RGD"/>
</dbReference>
<dbReference type="GO" id="GO:0005884">
    <property type="term" value="C:actin filament"/>
    <property type="evidence" value="ECO:0000250"/>
    <property type="project" value="UniProtKB"/>
</dbReference>
<dbReference type="GO" id="GO:0044297">
    <property type="term" value="C:cell body"/>
    <property type="evidence" value="ECO:0000250"/>
    <property type="project" value="AgBase"/>
</dbReference>
<dbReference type="GO" id="GO:0005737">
    <property type="term" value="C:cytoplasm"/>
    <property type="evidence" value="ECO:0000250"/>
    <property type="project" value="AgBase"/>
</dbReference>
<dbReference type="GO" id="GO:0030175">
    <property type="term" value="C:filopodium"/>
    <property type="evidence" value="ECO:0000250"/>
    <property type="project" value="AgBase"/>
</dbReference>
<dbReference type="GO" id="GO:0030027">
    <property type="term" value="C:lamellipodium"/>
    <property type="evidence" value="ECO:0000250"/>
    <property type="project" value="AgBase"/>
</dbReference>
<dbReference type="GO" id="GO:0030017">
    <property type="term" value="C:sarcomere"/>
    <property type="evidence" value="ECO:0000266"/>
    <property type="project" value="RGD"/>
</dbReference>
<dbReference type="GO" id="GO:0001725">
    <property type="term" value="C:stress fiber"/>
    <property type="evidence" value="ECO:0000250"/>
    <property type="project" value="UniProtKB"/>
</dbReference>
<dbReference type="GO" id="GO:0005865">
    <property type="term" value="C:striated muscle thin filament"/>
    <property type="evidence" value="ECO:0000250"/>
    <property type="project" value="UniProtKB"/>
</dbReference>
<dbReference type="GO" id="GO:0005524">
    <property type="term" value="F:ATP binding"/>
    <property type="evidence" value="ECO:0007669"/>
    <property type="project" value="UniProtKB-KW"/>
</dbReference>
<dbReference type="GO" id="GO:0016787">
    <property type="term" value="F:hydrolase activity"/>
    <property type="evidence" value="ECO:0007669"/>
    <property type="project" value="UniProtKB-KW"/>
</dbReference>
<dbReference type="GO" id="GO:0035865">
    <property type="term" value="P:cellular response to potassium ion"/>
    <property type="evidence" value="ECO:0000270"/>
    <property type="project" value="RGD"/>
</dbReference>
<dbReference type="GO" id="GO:0090131">
    <property type="term" value="P:mesenchyme migration"/>
    <property type="evidence" value="ECO:0000250"/>
    <property type="project" value="AgBase"/>
</dbReference>
<dbReference type="GO" id="GO:0010628">
    <property type="term" value="P:positive regulation of gene expression"/>
    <property type="evidence" value="ECO:0000250"/>
    <property type="project" value="AgBase"/>
</dbReference>
<dbReference type="GO" id="GO:0009612">
    <property type="term" value="P:response to mechanical stimulus"/>
    <property type="evidence" value="ECO:0000270"/>
    <property type="project" value="RGD"/>
</dbReference>
<dbReference type="GO" id="GO:0048545">
    <property type="term" value="P:response to steroid hormone"/>
    <property type="evidence" value="ECO:0000270"/>
    <property type="project" value="RGD"/>
</dbReference>
<dbReference type="GO" id="GO:0043503">
    <property type="term" value="P:skeletal muscle fiber adaptation"/>
    <property type="evidence" value="ECO:0000270"/>
    <property type="project" value="RGD"/>
</dbReference>
<dbReference type="GO" id="GO:0048741">
    <property type="term" value="P:skeletal muscle fiber development"/>
    <property type="evidence" value="ECO:0000250"/>
    <property type="project" value="UniProtKB"/>
</dbReference>
<dbReference type="GO" id="GO:0030240">
    <property type="term" value="P:skeletal muscle thin filament assembly"/>
    <property type="evidence" value="ECO:0000250"/>
    <property type="project" value="UniProtKB"/>
</dbReference>
<dbReference type="CDD" id="cd10224">
    <property type="entry name" value="ASKHA_NBD_actin"/>
    <property type="match status" value="1"/>
</dbReference>
<dbReference type="FunFam" id="3.30.420.40:FF:000131">
    <property type="entry name" value="Actin, alpha skeletal muscle"/>
    <property type="match status" value="1"/>
</dbReference>
<dbReference type="FunFam" id="3.30.420.40:FF:000291">
    <property type="entry name" value="Actin, alpha skeletal muscle"/>
    <property type="match status" value="1"/>
</dbReference>
<dbReference type="FunFam" id="3.90.640.10:FF:000047">
    <property type="entry name" value="Actin, alpha skeletal muscle"/>
    <property type="match status" value="1"/>
</dbReference>
<dbReference type="FunFam" id="3.30.420.40:FF:000058">
    <property type="entry name" value="Putative actin-related protein 5"/>
    <property type="match status" value="1"/>
</dbReference>
<dbReference type="Gene3D" id="3.30.420.40">
    <property type="match status" value="2"/>
</dbReference>
<dbReference type="Gene3D" id="3.90.640.10">
    <property type="entry name" value="Actin, Chain A, domain 4"/>
    <property type="match status" value="1"/>
</dbReference>
<dbReference type="InterPro" id="IPR004000">
    <property type="entry name" value="Actin"/>
</dbReference>
<dbReference type="InterPro" id="IPR020902">
    <property type="entry name" value="Actin/actin-like_CS"/>
</dbReference>
<dbReference type="InterPro" id="IPR004001">
    <property type="entry name" value="Actin_CS"/>
</dbReference>
<dbReference type="InterPro" id="IPR043129">
    <property type="entry name" value="ATPase_NBD"/>
</dbReference>
<dbReference type="PANTHER" id="PTHR11937">
    <property type="entry name" value="ACTIN"/>
    <property type="match status" value="1"/>
</dbReference>
<dbReference type="Pfam" id="PF00022">
    <property type="entry name" value="Actin"/>
    <property type="match status" value="1"/>
</dbReference>
<dbReference type="PRINTS" id="PR00190">
    <property type="entry name" value="ACTIN"/>
</dbReference>
<dbReference type="SMART" id="SM00268">
    <property type="entry name" value="ACTIN"/>
    <property type="match status" value="1"/>
</dbReference>
<dbReference type="SUPFAM" id="SSF53067">
    <property type="entry name" value="Actin-like ATPase domain"/>
    <property type="match status" value="2"/>
</dbReference>
<dbReference type="PROSITE" id="PS00406">
    <property type="entry name" value="ACTINS_1"/>
    <property type="match status" value="1"/>
</dbReference>
<dbReference type="PROSITE" id="PS00432">
    <property type="entry name" value="ACTINS_2"/>
    <property type="match status" value="1"/>
</dbReference>
<dbReference type="PROSITE" id="PS01132">
    <property type="entry name" value="ACTINS_ACT_LIKE"/>
    <property type="match status" value="1"/>
</dbReference>